<organism>
    <name type="scientific">Cellulomonas fimi</name>
    <dbReference type="NCBI Taxonomy" id="1708"/>
    <lineage>
        <taxon>Bacteria</taxon>
        <taxon>Bacillati</taxon>
        <taxon>Actinomycetota</taxon>
        <taxon>Actinomycetes</taxon>
        <taxon>Micrococcales</taxon>
        <taxon>Cellulomonadaceae</taxon>
        <taxon>Cellulomonas</taxon>
    </lineage>
</organism>
<proteinExistence type="evidence at protein level"/>
<name>NAG3_CELFI</name>
<evidence type="ECO:0000250" key="1"/>
<evidence type="ECO:0000269" key="2">
    <source>
    </source>
</evidence>
<evidence type="ECO:0000305" key="3"/>
<sequence length="564" mass="59993">MIDLTAAPFSLDDDGIAWVRTTLAEMGEDEKLGQLFCLITYTSDPEYLGYLTRGLHVGGVMLRTMTAADAAATVTTLQSTATVPLLISANLEGGASQTVQEATHVGSNMALAATGSTDHVRRAATVIGREARALGINWAFTPVVDIDLNFRNPITNTRTFGADAATVAAMGAEYVEAIQAQGLAASAKHFPGDGVDERDQHLLASVNTMSVEEWDDSFGVVYRAAIAAGVKTVMVGHIMLPAYSRALRPGVADRDILPGVVAEELLNDLLRDRLGFNGLVVSDSTTMAGLASVLPRSQAVPRVIAAGCDMFLFTKNLDEDFGYMRAGIRDGVITPERLDEAVTRILALKASLGLHRGTNLPAQGAAGVLADPDHSATAREVAASSITLVKEEPGVLPITRERYPRVLVYDLQNGGSPIGQGARAGAVEQFVDALVEAGHDVTRFEPGGGWEGMAAPTTDVTERHDLVLYLANLSTRSNQTVVRIEWAEPMGANVPAYVHSVPTVFVSFENPYHLFDVPRVRTLINTYGSSPVVLETLLAALQGKAPFAGSSPVDAFCGQWDTHL</sequence>
<accession>Q7WUL3</accession>
<comment type="function">
    <text evidence="2">Catalyzes the cleavage of beta-N-acetyl-D-glucosaminides and beta-D-glucosides. Might be involved in the degradation of glucuronic acid-containing glycosaminoglycans such as hyaluronic acid.</text>
</comment>
<comment type="catalytic activity">
    <reaction evidence="2">
        <text>Hydrolysis of terminal non-reducing N-acetyl-D-hexosamine residues in N-acetyl-beta-D-hexosaminides.</text>
        <dbReference type="EC" id="3.2.1.52"/>
    </reaction>
</comment>
<comment type="catalytic activity">
    <reaction evidence="2">
        <text>Hydrolysis of terminal, non-reducing beta-D-glucosyl residues with release of beta-D-glucose.</text>
        <dbReference type="EC" id="3.2.1.21"/>
    </reaction>
</comment>
<comment type="biophysicochemical properties">
    <kinetics>
        <KM evidence="2">2.7 mM for 4'-nitrophenyl beta-N-acetyl-D-glucosaminide</KM>
        <text>The catalytic efficiencies against 4'-nitrophenyl beta-N-acetyl-D-glucosaminide and 4'-nitrophenyl beta-D-glucopyranoside are similar.</text>
    </kinetics>
    <phDependence>
        <text evidence="2">Optimum pH is 7.3 with 4'-nitrophenyl beta-D-glucopyranoside as substrate. Precipitates below pH 6 and stable from pH 6.8 to 8.4.</text>
    </phDependence>
</comment>
<comment type="miscellaneous">
    <text>Catalyzes hydrolysis by a double-displacement mechanism via a covalent glycosyl-enzyme intermediate, involving the participation of a catalytic nucleophilic group in the enzyme active site.</text>
</comment>
<comment type="similarity">
    <text evidence="3">Belongs to the glycosyl hydrolase 3 family.</text>
</comment>
<gene>
    <name type="primary">nag3</name>
    <name type="synonym">nag3A</name>
</gene>
<reference key="1">
    <citation type="journal article" date="2006" name="FEBS J.">
        <title>Characterization of a beta-N-acetylhexosaminidase and a beta-N-acetylglucosaminidase/beta-glucosidase from Cellulomonas fimi.</title>
        <authorList>
            <person name="Mayer C."/>
            <person name="Vocadlo D.J."/>
            <person name="Mah M."/>
            <person name="Rupitz K."/>
            <person name="Stoll D."/>
            <person name="Warren R.A.J."/>
            <person name="Withers S.G."/>
        </authorList>
    </citation>
    <scope>NUCLEOTIDE SEQUENCE [GENOMIC DNA]</scope>
    <scope>PROTEIN SEQUENCE OF 1-11</scope>
    <scope>FUNCTION</scope>
    <scope>CATALYTIC ACTIVITY</scope>
    <scope>REACTION MECHANISM</scope>
    <scope>BIOPHYSICOCHEMICAL PROPERTIES</scope>
</reference>
<protein>
    <recommendedName>
        <fullName>Beta-N-acetylglucosaminidase/beta-glucosidase</fullName>
        <ecNumber>3.2.1.21</ecNumber>
        <ecNumber>3.2.1.52</ecNumber>
    </recommendedName>
    <alternativeName>
        <fullName>3-beta-N-acetyl-D-glucosaminidase/beta-D-glucosidase</fullName>
    </alternativeName>
    <alternativeName>
        <fullName>Nag3</fullName>
    </alternativeName>
</protein>
<feature type="chain" id="PRO_0000252454" description="Beta-N-acetylglucosaminidase/beta-glucosidase">
    <location>
        <begin position="1"/>
        <end position="564"/>
    </location>
</feature>
<feature type="active site" description="Nucleophile" evidence="1">
    <location>
        <position position="283"/>
    </location>
</feature>
<keyword id="KW-0119">Carbohydrate metabolism</keyword>
<keyword id="KW-0903">Direct protein sequencing</keyword>
<keyword id="KW-0326">Glycosidase</keyword>
<keyword id="KW-0378">Hydrolase</keyword>
<keyword id="KW-0624">Polysaccharide degradation</keyword>
<dbReference type="EC" id="3.2.1.21"/>
<dbReference type="EC" id="3.2.1.52"/>
<dbReference type="EMBL" id="AF478460">
    <property type="protein sequence ID" value="AAQ05801.1"/>
    <property type="molecule type" value="Genomic_DNA"/>
</dbReference>
<dbReference type="RefSeq" id="WP_013772128.1">
    <property type="nucleotide sequence ID" value="NZ_LR134387.1"/>
</dbReference>
<dbReference type="SMR" id="Q7WUL3"/>
<dbReference type="CAZy" id="GH3">
    <property type="family name" value="Glycoside Hydrolase Family 3"/>
</dbReference>
<dbReference type="OMA" id="WAFAPIV"/>
<dbReference type="OrthoDB" id="9805821at2"/>
<dbReference type="SABIO-RK" id="Q7WUL3"/>
<dbReference type="GO" id="GO:0008422">
    <property type="term" value="F:beta-glucosidase activity"/>
    <property type="evidence" value="ECO:0007669"/>
    <property type="project" value="UniProtKB-EC"/>
</dbReference>
<dbReference type="GO" id="GO:0004563">
    <property type="term" value="F:beta-N-acetylhexosaminidase activity"/>
    <property type="evidence" value="ECO:0007669"/>
    <property type="project" value="UniProtKB-EC"/>
</dbReference>
<dbReference type="GO" id="GO:0009254">
    <property type="term" value="P:peptidoglycan turnover"/>
    <property type="evidence" value="ECO:0007669"/>
    <property type="project" value="TreeGrafter"/>
</dbReference>
<dbReference type="GO" id="GO:0000272">
    <property type="term" value="P:polysaccharide catabolic process"/>
    <property type="evidence" value="ECO:0007669"/>
    <property type="project" value="UniProtKB-KW"/>
</dbReference>
<dbReference type="Gene3D" id="3.40.50.1700">
    <property type="entry name" value="Glycoside hydrolase family 3 C-terminal domain"/>
    <property type="match status" value="1"/>
</dbReference>
<dbReference type="Gene3D" id="3.20.20.300">
    <property type="entry name" value="Glycoside hydrolase, family 3, N-terminal domain"/>
    <property type="match status" value="1"/>
</dbReference>
<dbReference type="InterPro" id="IPR019800">
    <property type="entry name" value="Glyco_hydro_3_AS"/>
</dbReference>
<dbReference type="InterPro" id="IPR036881">
    <property type="entry name" value="Glyco_hydro_3_C_sf"/>
</dbReference>
<dbReference type="InterPro" id="IPR001764">
    <property type="entry name" value="Glyco_hydro_3_N"/>
</dbReference>
<dbReference type="InterPro" id="IPR036962">
    <property type="entry name" value="Glyco_hydro_3_N_sf"/>
</dbReference>
<dbReference type="InterPro" id="IPR017853">
    <property type="entry name" value="Glycoside_hydrolase_SF"/>
</dbReference>
<dbReference type="InterPro" id="IPR050226">
    <property type="entry name" value="NagZ_Beta-hexosaminidase"/>
</dbReference>
<dbReference type="PANTHER" id="PTHR30480:SF13">
    <property type="entry name" value="BETA-HEXOSAMINIDASE"/>
    <property type="match status" value="1"/>
</dbReference>
<dbReference type="PANTHER" id="PTHR30480">
    <property type="entry name" value="BETA-HEXOSAMINIDASE-RELATED"/>
    <property type="match status" value="1"/>
</dbReference>
<dbReference type="Pfam" id="PF00933">
    <property type="entry name" value="Glyco_hydro_3"/>
    <property type="match status" value="1"/>
</dbReference>
<dbReference type="SUPFAM" id="SSF51445">
    <property type="entry name" value="(Trans)glycosidases"/>
    <property type="match status" value="1"/>
</dbReference>
<dbReference type="PROSITE" id="PS00775">
    <property type="entry name" value="GLYCOSYL_HYDROL_F3"/>
    <property type="match status" value="1"/>
</dbReference>